<sequence length="43" mass="4540">MDSATVLSIGIAVVVIAVTGFSIYTAFGPPSVELEDPFEDHED</sequence>
<comment type="function">
    <text evidence="1">May play a role in photosystem I and II biogenesis.</text>
</comment>
<comment type="subcellular location">
    <subcellularLocation>
        <location evidence="1">Cellular thylakoid membrane</location>
        <topology evidence="1">Single-pass membrane protein</topology>
    </subcellularLocation>
</comment>
<comment type="similarity">
    <text evidence="1">Belongs to the PsbN family.</text>
</comment>
<comment type="caution">
    <text evidence="1">Originally thought to be a component of PSII; based on experiments in Synechocystis, N.tabacum and barley, and its absence from PSII in T.elongatus and T.vulcanus, this is probably not true.</text>
</comment>
<accession>B1XIE2</accession>
<evidence type="ECO:0000255" key="1">
    <source>
        <dbReference type="HAMAP-Rule" id="MF_00293"/>
    </source>
</evidence>
<proteinExistence type="inferred from homology"/>
<gene>
    <name evidence="1" type="primary">psbN</name>
    <name type="ordered locus">SYNPCC7002_A0809</name>
</gene>
<feature type="chain" id="PRO_0000362170" description="Protein PsbN">
    <location>
        <begin position="1"/>
        <end position="43"/>
    </location>
</feature>
<feature type="transmembrane region" description="Helical" evidence="1">
    <location>
        <begin position="7"/>
        <end position="27"/>
    </location>
</feature>
<dbReference type="EMBL" id="CP000951">
    <property type="protein sequence ID" value="ACA98813.1"/>
    <property type="molecule type" value="Genomic_DNA"/>
</dbReference>
<dbReference type="RefSeq" id="WP_012306437.1">
    <property type="nucleotide sequence ID" value="NZ_JAHHPU010000001.1"/>
</dbReference>
<dbReference type="SMR" id="B1XIE2"/>
<dbReference type="STRING" id="32049.SYNPCC7002_A0809"/>
<dbReference type="KEGG" id="syp:SYNPCC7002_A0809"/>
<dbReference type="eggNOG" id="ENOG50339MH">
    <property type="taxonomic scope" value="Bacteria"/>
</dbReference>
<dbReference type="HOGENOM" id="CLU_205504_0_0_3"/>
<dbReference type="Proteomes" id="UP000001688">
    <property type="component" value="Chromosome"/>
</dbReference>
<dbReference type="GO" id="GO:0031676">
    <property type="term" value="C:plasma membrane-derived thylakoid membrane"/>
    <property type="evidence" value="ECO:0007669"/>
    <property type="project" value="UniProtKB-SubCell"/>
</dbReference>
<dbReference type="GO" id="GO:0015979">
    <property type="term" value="P:photosynthesis"/>
    <property type="evidence" value="ECO:0007669"/>
    <property type="project" value="InterPro"/>
</dbReference>
<dbReference type="HAMAP" id="MF_00293">
    <property type="entry name" value="PSII_PsbN"/>
    <property type="match status" value="1"/>
</dbReference>
<dbReference type="InterPro" id="IPR003398">
    <property type="entry name" value="PSII_PsbN"/>
</dbReference>
<dbReference type="NCBIfam" id="NF009650">
    <property type="entry name" value="PRK13183.1"/>
    <property type="match status" value="1"/>
</dbReference>
<dbReference type="PANTHER" id="PTHR35326">
    <property type="entry name" value="PROTEIN PSBN"/>
    <property type="match status" value="1"/>
</dbReference>
<dbReference type="PANTHER" id="PTHR35326:SF3">
    <property type="entry name" value="PROTEIN PSBN"/>
    <property type="match status" value="1"/>
</dbReference>
<dbReference type="Pfam" id="PF02468">
    <property type="entry name" value="PsbN"/>
    <property type="match status" value="1"/>
</dbReference>
<reference key="1">
    <citation type="submission" date="2008-02" db="EMBL/GenBank/DDBJ databases">
        <title>Complete sequence of Synechococcus sp. PCC 7002.</title>
        <authorList>
            <person name="Li T."/>
            <person name="Zhao J."/>
            <person name="Zhao C."/>
            <person name="Liu Z."/>
            <person name="Zhao F."/>
            <person name="Marquardt J."/>
            <person name="Nomura C.T."/>
            <person name="Persson S."/>
            <person name="Detter J.C."/>
            <person name="Richardson P.M."/>
            <person name="Lanz C."/>
            <person name="Schuster S.C."/>
            <person name="Wang J."/>
            <person name="Li S."/>
            <person name="Huang X."/>
            <person name="Cai T."/>
            <person name="Yu Z."/>
            <person name="Luo J."/>
            <person name="Zhao J."/>
            <person name="Bryant D.A."/>
        </authorList>
    </citation>
    <scope>NUCLEOTIDE SEQUENCE [LARGE SCALE GENOMIC DNA]</scope>
    <source>
        <strain>ATCC 27264 / PCC 7002 / PR-6</strain>
    </source>
</reference>
<keyword id="KW-0472">Membrane</keyword>
<keyword id="KW-1185">Reference proteome</keyword>
<keyword id="KW-0793">Thylakoid</keyword>
<keyword id="KW-0812">Transmembrane</keyword>
<keyword id="KW-1133">Transmembrane helix</keyword>
<organism>
    <name type="scientific">Picosynechococcus sp. (strain ATCC 27264 / PCC 7002 / PR-6)</name>
    <name type="common">Agmenellum quadruplicatum</name>
    <dbReference type="NCBI Taxonomy" id="32049"/>
    <lineage>
        <taxon>Bacteria</taxon>
        <taxon>Bacillati</taxon>
        <taxon>Cyanobacteriota</taxon>
        <taxon>Cyanophyceae</taxon>
        <taxon>Oscillatoriophycideae</taxon>
        <taxon>Chroococcales</taxon>
        <taxon>Geminocystaceae</taxon>
        <taxon>Picosynechococcus</taxon>
    </lineage>
</organism>
<name>PSBN_PICP2</name>
<protein>
    <recommendedName>
        <fullName evidence="1">Protein PsbN</fullName>
    </recommendedName>
</protein>